<name>FHLA_ECOLI</name>
<dbReference type="EMBL" id="X52227">
    <property type="protein sequence ID" value="CAA36476.1"/>
    <property type="molecule type" value="Genomic_DNA"/>
</dbReference>
<dbReference type="EMBL" id="U29579">
    <property type="protein sequence ID" value="AAA69241.1"/>
    <property type="molecule type" value="Genomic_DNA"/>
</dbReference>
<dbReference type="EMBL" id="M58504">
    <property type="protein sequence ID" value="AAA23770.1"/>
    <property type="molecule type" value="Genomic_DNA"/>
</dbReference>
<dbReference type="EMBL" id="U00096">
    <property type="protein sequence ID" value="AAC75773.1"/>
    <property type="molecule type" value="Genomic_DNA"/>
</dbReference>
<dbReference type="EMBL" id="AP009048">
    <property type="protein sequence ID" value="BAE76808.1"/>
    <property type="molecule type" value="Genomic_DNA"/>
</dbReference>
<dbReference type="PIR" id="S12079">
    <property type="entry name" value="S12079"/>
</dbReference>
<dbReference type="RefSeq" id="NP_417211.1">
    <property type="nucleotide sequence ID" value="NC_000913.3"/>
</dbReference>
<dbReference type="SMR" id="P19323"/>
<dbReference type="BioGRID" id="4261423">
    <property type="interactions" value="95"/>
</dbReference>
<dbReference type="BioGRID" id="851513">
    <property type="interactions" value="2"/>
</dbReference>
<dbReference type="FunCoup" id="P19323">
    <property type="interactions" value="48"/>
</dbReference>
<dbReference type="IntAct" id="P19323">
    <property type="interactions" value="4"/>
</dbReference>
<dbReference type="STRING" id="511145.b2731"/>
<dbReference type="jPOST" id="P19323"/>
<dbReference type="PaxDb" id="511145-b2731"/>
<dbReference type="EnsemblBacteria" id="AAC75773">
    <property type="protein sequence ID" value="AAC75773"/>
    <property type="gene ID" value="b2731"/>
</dbReference>
<dbReference type="GeneID" id="947181"/>
<dbReference type="KEGG" id="ecj:JW2701"/>
<dbReference type="KEGG" id="eco:b2731"/>
<dbReference type="KEGG" id="ecoc:C3026_15025"/>
<dbReference type="PATRIC" id="fig|1411691.4.peg.4010"/>
<dbReference type="EchoBASE" id="EB0297"/>
<dbReference type="eggNOG" id="COG3604">
    <property type="taxonomic scope" value="Bacteria"/>
</dbReference>
<dbReference type="HOGENOM" id="CLU_000445_95_0_6"/>
<dbReference type="InParanoid" id="P19323"/>
<dbReference type="OMA" id="RMKRTID"/>
<dbReference type="OrthoDB" id="9804019at2"/>
<dbReference type="PhylomeDB" id="P19323"/>
<dbReference type="BioCyc" id="EcoCyc:PD02936"/>
<dbReference type="PRO" id="PR:P19323"/>
<dbReference type="Proteomes" id="UP000000625">
    <property type="component" value="Chromosome"/>
</dbReference>
<dbReference type="GO" id="GO:0032993">
    <property type="term" value="C:protein-DNA complex"/>
    <property type="evidence" value="ECO:0000318"/>
    <property type="project" value="GO_Central"/>
</dbReference>
<dbReference type="GO" id="GO:0005667">
    <property type="term" value="C:transcription regulator complex"/>
    <property type="evidence" value="ECO:0000314"/>
    <property type="project" value="EcoCyc"/>
</dbReference>
<dbReference type="GO" id="GO:0005524">
    <property type="term" value="F:ATP binding"/>
    <property type="evidence" value="ECO:0007669"/>
    <property type="project" value="UniProtKB-KW"/>
</dbReference>
<dbReference type="GO" id="GO:0016887">
    <property type="term" value="F:ATP hydrolysis activity"/>
    <property type="evidence" value="ECO:0007669"/>
    <property type="project" value="InterPro"/>
</dbReference>
<dbReference type="GO" id="GO:0000987">
    <property type="term" value="F:cis-regulatory region sequence-specific DNA binding"/>
    <property type="evidence" value="ECO:0000314"/>
    <property type="project" value="EcoCyc"/>
</dbReference>
<dbReference type="GO" id="GO:0001216">
    <property type="term" value="F:DNA-binding transcription activator activity"/>
    <property type="evidence" value="ECO:0000318"/>
    <property type="project" value="GO_Central"/>
</dbReference>
<dbReference type="GO" id="GO:0042802">
    <property type="term" value="F:identical protein binding"/>
    <property type="evidence" value="ECO:0000314"/>
    <property type="project" value="EcoCyc"/>
</dbReference>
<dbReference type="GO" id="GO:0006351">
    <property type="term" value="P:DNA-templated transcription"/>
    <property type="evidence" value="ECO:0000314"/>
    <property type="project" value="EcoCyc"/>
</dbReference>
<dbReference type="GO" id="GO:0000160">
    <property type="term" value="P:phosphorelay signal transduction system"/>
    <property type="evidence" value="ECO:0007669"/>
    <property type="project" value="UniProtKB-KW"/>
</dbReference>
<dbReference type="GO" id="GO:0045893">
    <property type="term" value="P:positive regulation of DNA-templated transcription"/>
    <property type="evidence" value="ECO:0000318"/>
    <property type="project" value="GO_Central"/>
</dbReference>
<dbReference type="GO" id="GO:2000144">
    <property type="term" value="P:positive regulation of DNA-templated transcription initiation"/>
    <property type="evidence" value="ECO:0000314"/>
    <property type="project" value="EcoCyc"/>
</dbReference>
<dbReference type="CDD" id="cd00009">
    <property type="entry name" value="AAA"/>
    <property type="match status" value="1"/>
</dbReference>
<dbReference type="FunFam" id="1.10.8.60:FF:000014">
    <property type="entry name" value="DNA-binding transcriptional regulator NtrC"/>
    <property type="match status" value="1"/>
</dbReference>
<dbReference type="FunFam" id="3.40.50.300:FF:000006">
    <property type="entry name" value="DNA-binding transcriptional regulator NtrC"/>
    <property type="match status" value="1"/>
</dbReference>
<dbReference type="FunFam" id="1.10.10.60:FF:000301">
    <property type="entry name" value="Formate hydrogenlyase transcriptional activator"/>
    <property type="match status" value="1"/>
</dbReference>
<dbReference type="FunFam" id="3.30.450.40:FF:000024">
    <property type="entry name" value="Formate hydrogenlyase transcriptional activator"/>
    <property type="match status" value="1"/>
</dbReference>
<dbReference type="Gene3D" id="1.10.8.60">
    <property type="match status" value="1"/>
</dbReference>
<dbReference type="Gene3D" id="3.30.450.40">
    <property type="match status" value="2"/>
</dbReference>
<dbReference type="Gene3D" id="1.10.10.60">
    <property type="entry name" value="Homeodomain-like"/>
    <property type="match status" value="1"/>
</dbReference>
<dbReference type="Gene3D" id="3.40.50.300">
    <property type="entry name" value="P-loop containing nucleotide triphosphate hydrolases"/>
    <property type="match status" value="1"/>
</dbReference>
<dbReference type="InterPro" id="IPR003593">
    <property type="entry name" value="AAA+_ATPase"/>
</dbReference>
<dbReference type="InterPro" id="IPR003018">
    <property type="entry name" value="GAF"/>
</dbReference>
<dbReference type="InterPro" id="IPR029016">
    <property type="entry name" value="GAF-like_dom_sf"/>
</dbReference>
<dbReference type="InterPro" id="IPR009057">
    <property type="entry name" value="Homeodomain-like_sf"/>
</dbReference>
<dbReference type="InterPro" id="IPR002197">
    <property type="entry name" value="HTH_Fis"/>
</dbReference>
<dbReference type="InterPro" id="IPR027417">
    <property type="entry name" value="P-loop_NTPase"/>
</dbReference>
<dbReference type="InterPro" id="IPR002078">
    <property type="entry name" value="Sigma_54_int"/>
</dbReference>
<dbReference type="InterPro" id="IPR025662">
    <property type="entry name" value="Sigma_54_int_dom_ATP-bd_1"/>
</dbReference>
<dbReference type="InterPro" id="IPR025944">
    <property type="entry name" value="Sigma_54_int_dom_CS"/>
</dbReference>
<dbReference type="NCBIfam" id="NF011958">
    <property type="entry name" value="PRK15429.1"/>
    <property type="match status" value="1"/>
</dbReference>
<dbReference type="PANTHER" id="PTHR32071:SF123">
    <property type="entry name" value="DNA-BINDING TRANSCRIPTIONAL ACTIVATOR HYFR-RELATED"/>
    <property type="match status" value="1"/>
</dbReference>
<dbReference type="PANTHER" id="PTHR32071">
    <property type="entry name" value="TRANSCRIPTIONAL REGULATORY PROTEIN"/>
    <property type="match status" value="1"/>
</dbReference>
<dbReference type="Pfam" id="PF01590">
    <property type="entry name" value="GAF"/>
    <property type="match status" value="1"/>
</dbReference>
<dbReference type="Pfam" id="PF00158">
    <property type="entry name" value="Sigma54_activat"/>
    <property type="match status" value="1"/>
</dbReference>
<dbReference type="PRINTS" id="PR01590">
    <property type="entry name" value="HTHFIS"/>
</dbReference>
<dbReference type="SMART" id="SM00382">
    <property type="entry name" value="AAA"/>
    <property type="match status" value="1"/>
</dbReference>
<dbReference type="SMART" id="SM00065">
    <property type="entry name" value="GAF"/>
    <property type="match status" value="2"/>
</dbReference>
<dbReference type="SUPFAM" id="SSF55781">
    <property type="entry name" value="GAF domain-like"/>
    <property type="match status" value="2"/>
</dbReference>
<dbReference type="SUPFAM" id="SSF46689">
    <property type="entry name" value="Homeodomain-like"/>
    <property type="match status" value="1"/>
</dbReference>
<dbReference type="SUPFAM" id="SSF52540">
    <property type="entry name" value="P-loop containing nucleoside triphosphate hydrolases"/>
    <property type="match status" value="1"/>
</dbReference>
<dbReference type="PROSITE" id="PS00675">
    <property type="entry name" value="SIGMA54_INTERACT_1"/>
    <property type="match status" value="1"/>
</dbReference>
<dbReference type="PROSITE" id="PS00688">
    <property type="entry name" value="SIGMA54_INTERACT_3"/>
    <property type="match status" value="1"/>
</dbReference>
<dbReference type="PROSITE" id="PS50045">
    <property type="entry name" value="SIGMA54_INTERACT_4"/>
    <property type="match status" value="1"/>
</dbReference>
<organism>
    <name type="scientific">Escherichia coli (strain K12)</name>
    <dbReference type="NCBI Taxonomy" id="83333"/>
    <lineage>
        <taxon>Bacteria</taxon>
        <taxon>Pseudomonadati</taxon>
        <taxon>Pseudomonadota</taxon>
        <taxon>Gammaproteobacteria</taxon>
        <taxon>Enterobacterales</taxon>
        <taxon>Enterobacteriaceae</taxon>
        <taxon>Escherichia</taxon>
    </lineage>
</organism>
<reference key="1">
    <citation type="journal article" date="1990" name="Mol. Microbiol.">
        <title>Identification and sequence analysis of the gene encoding the transcriptional activator of the formate hydrogenlyase system of Escherichia coli.</title>
        <authorList>
            <person name="Schlensog V."/>
            <person name="Boeck A."/>
        </authorList>
    </citation>
    <scope>NUCLEOTIDE SEQUENCE [GENOMIC DNA]</scope>
    <source>
        <strain>K12 / MC4100 / ATCC 35695 / DSM 6574</strain>
    </source>
</reference>
<reference key="2">
    <citation type="journal article" date="1990" name="J. Bacteriol.">
        <title>Genetic regulation of formate hydrogenlyase of Escherichia coli: role of the fhlA gene product as a transcriptional activator for a new regulatory gene, fhlB.</title>
        <authorList>
            <person name="Maupin J.A."/>
            <person name="Shanmugam K.T."/>
        </authorList>
    </citation>
    <scope>NUCLEOTIDE SEQUENCE [GENOMIC DNA]</scope>
</reference>
<reference key="3">
    <citation type="journal article" date="1997" name="Science">
        <title>The complete genome sequence of Escherichia coli K-12.</title>
        <authorList>
            <person name="Blattner F.R."/>
            <person name="Plunkett G. III"/>
            <person name="Bloch C.A."/>
            <person name="Perna N.T."/>
            <person name="Burland V."/>
            <person name="Riley M."/>
            <person name="Collado-Vides J."/>
            <person name="Glasner J.D."/>
            <person name="Rode C.K."/>
            <person name="Mayhew G.F."/>
            <person name="Gregor J."/>
            <person name="Davis N.W."/>
            <person name="Kirkpatrick H.A."/>
            <person name="Goeden M.A."/>
            <person name="Rose D.J."/>
            <person name="Mau B."/>
            <person name="Shao Y."/>
        </authorList>
    </citation>
    <scope>NUCLEOTIDE SEQUENCE [LARGE SCALE GENOMIC DNA]</scope>
    <source>
        <strain>K12 / MG1655 / ATCC 47076</strain>
    </source>
</reference>
<reference key="4">
    <citation type="journal article" date="2006" name="Mol. Syst. Biol.">
        <title>Highly accurate genome sequences of Escherichia coli K-12 strains MG1655 and W3110.</title>
        <authorList>
            <person name="Hayashi K."/>
            <person name="Morooka N."/>
            <person name="Yamamoto Y."/>
            <person name="Fujita K."/>
            <person name="Isono K."/>
            <person name="Choi S."/>
            <person name="Ohtsubo E."/>
            <person name="Baba T."/>
            <person name="Wanner B.L."/>
            <person name="Mori H."/>
            <person name="Horiuchi T."/>
        </authorList>
    </citation>
    <scope>NUCLEOTIDE SEQUENCE [LARGE SCALE GENOMIC DNA]</scope>
    <source>
        <strain>K12 / W3110 / ATCC 27325 / DSM 5911</strain>
    </source>
</reference>
<reference key="5">
    <citation type="journal article" date="2002" name="J. Bacteriol.">
        <title>Regulation of the hydrogenase-4 operon of Escherichia coli by the sigma(54)-dependent transcriptional activators FhlA and HyfR.</title>
        <authorList>
            <person name="Skibinski D.A."/>
            <person name="Golby P."/>
            <person name="Chang Y.S."/>
            <person name="Sargent F."/>
            <person name="Hoffman R."/>
            <person name="Harper R."/>
            <person name="Guest J.R."/>
            <person name="Attwood M.M."/>
            <person name="Berks B.C."/>
            <person name="Andrews S.C."/>
        </authorList>
    </citation>
    <scope>FUNCTION</scope>
    <scope>REGULON</scope>
    <scope>DISRUPTION PHENOTYPE</scope>
    <source>
        <strain>K12 / MC4100 / ATCC 35695 / DSM 6574</strain>
    </source>
</reference>
<protein>
    <recommendedName>
        <fullName>Formate hydrogenlyase transcriptional activator FhlA</fullName>
    </recommendedName>
</protein>
<feature type="chain" id="PRO_0000081297" description="Formate hydrogenlyase transcriptional activator FhlA">
    <location>
        <begin position="1"/>
        <end position="692"/>
    </location>
</feature>
<feature type="domain" description="GAF">
    <location>
        <begin position="202"/>
        <end position="344"/>
    </location>
</feature>
<feature type="domain" description="Sigma-54 factor interaction" evidence="2">
    <location>
        <begin position="381"/>
        <end position="610"/>
    </location>
</feature>
<feature type="DNA-binding region" description="H-T-H motif" evidence="1">
    <location>
        <begin position="663"/>
        <end position="682"/>
    </location>
</feature>
<feature type="binding site" evidence="2">
    <location>
        <begin position="409"/>
        <end position="416"/>
    </location>
    <ligand>
        <name>ATP</name>
        <dbReference type="ChEBI" id="CHEBI:30616"/>
    </ligand>
</feature>
<feature type="binding site" evidence="2">
    <location>
        <begin position="472"/>
        <end position="481"/>
    </location>
    <ligand>
        <name>ATP</name>
        <dbReference type="ChEBI" id="CHEBI:30616"/>
    </ligand>
</feature>
<feature type="sequence conflict" description="In Ref. 2; AAA23770." evidence="4" ref="2">
    <original>KRSALADNAAI</original>
    <variation>NVLRRQRGY</variation>
    <location>
        <begin position="39"/>
        <end position="49"/>
    </location>
</feature>
<feature type="sequence conflict" description="In Ref. 2; AAA23770." evidence="4" ref="2">
    <original>ASYYASREKDTPI</original>
    <variation>RLISVACKRHPH</variation>
    <location>
        <begin position="59"/>
        <end position="71"/>
    </location>
</feature>
<feature type="sequence conflict" description="In Ref. 2; AAA23770." evidence="4" ref="2">
    <original>V</original>
    <variation>L</variation>
    <location>
        <position position="210"/>
    </location>
</feature>
<feature type="sequence conflict" description="In Ref. 2; AAA23770." evidence="4" ref="2">
    <original>PYERMLFDTWGNQIQTLCLLPLMSGDTMLGVLKLAQCEEKVFTTTNLNLL</original>
    <variation>LRMSSTPGATDSNLVPVTADVWRHHAGRAETGANRRESVYHYQSEFT</variation>
    <location>
        <begin position="284"/>
        <end position="333"/>
    </location>
</feature>
<feature type="sequence conflict" description="In Ref. 2; AAA23770." evidence="4" ref="2">
    <original>A</original>
    <variation>R</variation>
    <location>
        <position position="666"/>
    </location>
</feature>
<keyword id="KW-0010">Activator</keyword>
<keyword id="KW-0067">ATP-binding</keyword>
<keyword id="KW-0238">DNA-binding</keyword>
<keyword id="KW-0547">Nucleotide-binding</keyword>
<keyword id="KW-1185">Reference proteome</keyword>
<keyword id="KW-0804">Transcription</keyword>
<keyword id="KW-0805">Transcription regulation</keyword>
<keyword id="KW-0902">Two-component regulatory system</keyword>
<gene>
    <name type="primary">fhlA</name>
    <name type="ordered locus">b2731</name>
    <name type="ordered locus">JW2701</name>
</gene>
<comment type="function">
    <text evidence="3">Required for induction of expression of the formate dehydrogenase H and hydrogenase-3 structural genes. Also activates expression of hyf operon (encodes the silent hydrogenase-4 gene cluster) (PubMed:12426353).</text>
</comment>
<comment type="interaction">
    <interactant intactId="EBI-1113147">
        <id>P19323</id>
    </interactant>
    <interactant intactId="EBI-543750">
        <id>P0A6F5</id>
        <label>groEL</label>
    </interactant>
    <organismsDiffer>false</organismsDiffer>
    <experiments>2</experiments>
</comment>
<comment type="disruption phenotype">
    <text evidence="3">Loss of formate-inducible expression of the hyf operon (PubMed:12426353).</text>
</comment>
<evidence type="ECO:0000250" key="1"/>
<evidence type="ECO:0000255" key="2">
    <source>
        <dbReference type="PROSITE-ProRule" id="PRU00193"/>
    </source>
</evidence>
<evidence type="ECO:0000269" key="3">
    <source>
    </source>
</evidence>
<evidence type="ECO:0000305" key="4"/>
<accession>P19323</accession>
<accession>Q2MA98</accession>
<accession>Q47214</accession>
<proteinExistence type="evidence at protein level"/>
<sequence length="692" mass="78468">MSYTPMSDLGQQGLFDITRTLLQQPDLASLCEALSQLVKRSALADNAAIVLWQAQTQRASYYASREKDTPIKYEDETVLAHGPVRSILSRPDTLHCSYEEFCETWPQLDAGGLYPKFGHYCLMPLAAEGHIFGGCEFIRYDDRPWSEKEFNRLQTFTQIVSVVTEQIQSRVVNNVDYELLCRERDNFRILVAITNAVLSRLDMDELVSEVAKEIHYYFDIDDISIVLRSHRKNKLNIYSTHYLDKQHPAHEQSEVDEAGTLTERVFKSKEMLLINLHERDDLAPYERMLFDTWGNQIQTLCLLPLMSGDTMLGVLKLAQCEEKVFTTTNLNLLRQIAERVAIAVDNALAYQEIHRLKERLVDENLALTEQLNNVDSEFGEIIGRSEAMYSVLKQVEMVAQSDSTVLILGETGTGKELIARAIHNLSGRNNRRMVKMNCAAMPAGLLESDLFGHERGAFTGASAQRIGRFELADKSSLFLDEVGDMPLELQPKLLRVLQEQEFERLGSNKIIQTDVRLIAATNRDLKKMVADREFRSDLYYRLNVFPIHLPPLRERPEDIPLLAKAFTFKIARRLGRNIDSIPAETLRTLSNMEWPGNVRELENVIERAVLLTRGNVLQLSLPDIVLPEPETPPAATVVALEGEDEYQLIVRVLKETNGVVAGPKGAAQRLGLKRTTLLSRMKRLGIDKSALI</sequence>